<gene>
    <name evidence="1" type="primary">rhlB</name>
    <name type="ordered locus">VP3002</name>
</gene>
<evidence type="ECO:0000255" key="1">
    <source>
        <dbReference type="HAMAP-Rule" id="MF_00661"/>
    </source>
</evidence>
<evidence type="ECO:0000256" key="2">
    <source>
        <dbReference type="SAM" id="MobiDB-lite"/>
    </source>
</evidence>
<comment type="function">
    <text evidence="1">DEAD-box RNA helicase involved in RNA degradation. Has RNA-dependent ATPase activity and unwinds double-stranded RNA.</text>
</comment>
<comment type="catalytic activity">
    <reaction evidence="1">
        <text>ATP + H2O = ADP + phosphate + H(+)</text>
        <dbReference type="Rhea" id="RHEA:13065"/>
        <dbReference type="ChEBI" id="CHEBI:15377"/>
        <dbReference type="ChEBI" id="CHEBI:15378"/>
        <dbReference type="ChEBI" id="CHEBI:30616"/>
        <dbReference type="ChEBI" id="CHEBI:43474"/>
        <dbReference type="ChEBI" id="CHEBI:456216"/>
        <dbReference type="EC" id="3.6.4.13"/>
    </reaction>
</comment>
<comment type="subunit">
    <text evidence="1">Component of the RNA degradosome, which is a multiprotein complex involved in RNA processing and mRNA degradation.</text>
</comment>
<comment type="subcellular location">
    <subcellularLocation>
        <location evidence="1">Cytoplasm</location>
    </subcellularLocation>
</comment>
<comment type="similarity">
    <text evidence="1">Belongs to the DEAD box helicase family. RhlB subfamily.</text>
</comment>
<feature type="chain" id="PRO_0000200787" description="ATP-dependent RNA helicase RhlB">
    <location>
        <begin position="1"/>
        <end position="437"/>
    </location>
</feature>
<feature type="domain" description="Helicase ATP-binding" evidence="1">
    <location>
        <begin position="40"/>
        <end position="219"/>
    </location>
</feature>
<feature type="domain" description="Helicase C-terminal" evidence="1">
    <location>
        <begin position="245"/>
        <end position="390"/>
    </location>
</feature>
<feature type="region of interest" description="Disordered" evidence="2">
    <location>
        <begin position="397"/>
        <end position="437"/>
    </location>
</feature>
<feature type="short sequence motif" description="Q motif">
    <location>
        <begin position="9"/>
        <end position="37"/>
    </location>
</feature>
<feature type="short sequence motif" description="DEAD box">
    <location>
        <begin position="165"/>
        <end position="168"/>
    </location>
</feature>
<feature type="compositionally biased region" description="Basic residues" evidence="2">
    <location>
        <begin position="417"/>
        <end position="428"/>
    </location>
</feature>
<feature type="binding site" evidence="1">
    <location>
        <begin position="53"/>
        <end position="60"/>
    </location>
    <ligand>
        <name>ATP</name>
        <dbReference type="ChEBI" id="CHEBI:30616"/>
    </ligand>
</feature>
<accession>Q87KH5</accession>
<proteinExistence type="inferred from homology"/>
<organism>
    <name type="scientific">Vibrio parahaemolyticus serotype O3:K6 (strain RIMD 2210633)</name>
    <dbReference type="NCBI Taxonomy" id="223926"/>
    <lineage>
        <taxon>Bacteria</taxon>
        <taxon>Pseudomonadati</taxon>
        <taxon>Pseudomonadota</taxon>
        <taxon>Gammaproteobacteria</taxon>
        <taxon>Vibrionales</taxon>
        <taxon>Vibrionaceae</taxon>
        <taxon>Vibrio</taxon>
    </lineage>
</organism>
<name>RHLB_VIBPA</name>
<dbReference type="EC" id="3.6.4.13" evidence="1"/>
<dbReference type="EMBL" id="BA000031">
    <property type="protein sequence ID" value="BAC61265.1"/>
    <property type="molecule type" value="Genomic_DNA"/>
</dbReference>
<dbReference type="RefSeq" id="NP_799381.1">
    <property type="nucleotide sequence ID" value="NC_004603.1"/>
</dbReference>
<dbReference type="RefSeq" id="WP_005458582.1">
    <property type="nucleotide sequence ID" value="NC_004603.1"/>
</dbReference>
<dbReference type="SMR" id="Q87KH5"/>
<dbReference type="GeneID" id="1190594"/>
<dbReference type="KEGG" id="vpa:VP3002"/>
<dbReference type="PATRIC" id="fig|223926.6.peg.2887"/>
<dbReference type="eggNOG" id="COG0513">
    <property type="taxonomic scope" value="Bacteria"/>
</dbReference>
<dbReference type="HOGENOM" id="CLU_003041_1_3_6"/>
<dbReference type="Proteomes" id="UP000002493">
    <property type="component" value="Chromosome 1"/>
</dbReference>
<dbReference type="GO" id="GO:0005829">
    <property type="term" value="C:cytosol"/>
    <property type="evidence" value="ECO:0007669"/>
    <property type="project" value="TreeGrafter"/>
</dbReference>
<dbReference type="GO" id="GO:0005524">
    <property type="term" value="F:ATP binding"/>
    <property type="evidence" value="ECO:0007669"/>
    <property type="project" value="UniProtKB-UniRule"/>
</dbReference>
<dbReference type="GO" id="GO:0016887">
    <property type="term" value="F:ATP hydrolysis activity"/>
    <property type="evidence" value="ECO:0007669"/>
    <property type="project" value="RHEA"/>
</dbReference>
<dbReference type="GO" id="GO:0003723">
    <property type="term" value="F:RNA binding"/>
    <property type="evidence" value="ECO:0007669"/>
    <property type="project" value="UniProtKB-UniRule"/>
</dbReference>
<dbReference type="GO" id="GO:0003724">
    <property type="term" value="F:RNA helicase activity"/>
    <property type="evidence" value="ECO:0007669"/>
    <property type="project" value="UniProtKB-UniRule"/>
</dbReference>
<dbReference type="GO" id="GO:0006401">
    <property type="term" value="P:RNA catabolic process"/>
    <property type="evidence" value="ECO:0007669"/>
    <property type="project" value="UniProtKB-UniRule"/>
</dbReference>
<dbReference type="CDD" id="cd00268">
    <property type="entry name" value="DEADc"/>
    <property type="match status" value="1"/>
</dbReference>
<dbReference type="CDD" id="cd18787">
    <property type="entry name" value="SF2_C_DEAD"/>
    <property type="match status" value="1"/>
</dbReference>
<dbReference type="FunFam" id="3.40.50.300:FF:000008">
    <property type="entry name" value="ATP-dependent RNA helicase RhlB"/>
    <property type="match status" value="1"/>
</dbReference>
<dbReference type="FunFam" id="3.40.50.300:FF:000312">
    <property type="entry name" value="ATP-dependent RNA helicase RhlB"/>
    <property type="match status" value="1"/>
</dbReference>
<dbReference type="Gene3D" id="3.40.50.300">
    <property type="entry name" value="P-loop containing nucleotide triphosphate hydrolases"/>
    <property type="match status" value="2"/>
</dbReference>
<dbReference type="HAMAP" id="MF_00661">
    <property type="entry name" value="DEAD_helicase_RhlB"/>
    <property type="match status" value="1"/>
</dbReference>
<dbReference type="InterPro" id="IPR011545">
    <property type="entry name" value="DEAD/DEAH_box_helicase_dom"/>
</dbReference>
<dbReference type="InterPro" id="IPR050079">
    <property type="entry name" value="DEAD_box_RNA_helicase"/>
</dbReference>
<dbReference type="InterPro" id="IPR014001">
    <property type="entry name" value="Helicase_ATP-bd"/>
</dbReference>
<dbReference type="InterPro" id="IPR001650">
    <property type="entry name" value="Helicase_C-like"/>
</dbReference>
<dbReference type="InterPro" id="IPR027417">
    <property type="entry name" value="P-loop_NTPase"/>
</dbReference>
<dbReference type="InterPro" id="IPR000629">
    <property type="entry name" value="RNA-helicase_DEAD-box_CS"/>
</dbReference>
<dbReference type="InterPro" id="IPR023554">
    <property type="entry name" value="RNA_helicase_ATP-dep_RhlB"/>
</dbReference>
<dbReference type="InterPro" id="IPR014014">
    <property type="entry name" value="RNA_helicase_DEAD_Q_motif"/>
</dbReference>
<dbReference type="NCBIfam" id="NF003419">
    <property type="entry name" value="PRK04837.1"/>
    <property type="match status" value="1"/>
</dbReference>
<dbReference type="PANTHER" id="PTHR47959:SF10">
    <property type="entry name" value="ATP-DEPENDENT RNA HELICASE RHLB"/>
    <property type="match status" value="1"/>
</dbReference>
<dbReference type="PANTHER" id="PTHR47959">
    <property type="entry name" value="ATP-DEPENDENT RNA HELICASE RHLE-RELATED"/>
    <property type="match status" value="1"/>
</dbReference>
<dbReference type="Pfam" id="PF00270">
    <property type="entry name" value="DEAD"/>
    <property type="match status" value="1"/>
</dbReference>
<dbReference type="Pfam" id="PF00271">
    <property type="entry name" value="Helicase_C"/>
    <property type="match status" value="1"/>
</dbReference>
<dbReference type="SMART" id="SM00487">
    <property type="entry name" value="DEXDc"/>
    <property type="match status" value="1"/>
</dbReference>
<dbReference type="SMART" id="SM00490">
    <property type="entry name" value="HELICc"/>
    <property type="match status" value="1"/>
</dbReference>
<dbReference type="SUPFAM" id="SSF52540">
    <property type="entry name" value="P-loop containing nucleoside triphosphate hydrolases"/>
    <property type="match status" value="1"/>
</dbReference>
<dbReference type="PROSITE" id="PS00039">
    <property type="entry name" value="DEAD_ATP_HELICASE"/>
    <property type="match status" value="1"/>
</dbReference>
<dbReference type="PROSITE" id="PS51192">
    <property type="entry name" value="HELICASE_ATP_BIND_1"/>
    <property type="match status" value="1"/>
</dbReference>
<dbReference type="PROSITE" id="PS51194">
    <property type="entry name" value="HELICASE_CTER"/>
    <property type="match status" value="1"/>
</dbReference>
<dbReference type="PROSITE" id="PS51195">
    <property type="entry name" value="Q_MOTIF"/>
    <property type="match status" value="1"/>
</dbReference>
<reference key="1">
    <citation type="journal article" date="2003" name="Lancet">
        <title>Genome sequence of Vibrio parahaemolyticus: a pathogenic mechanism distinct from that of V. cholerae.</title>
        <authorList>
            <person name="Makino K."/>
            <person name="Oshima K."/>
            <person name="Kurokawa K."/>
            <person name="Yokoyama K."/>
            <person name="Uda T."/>
            <person name="Tagomori K."/>
            <person name="Iijima Y."/>
            <person name="Najima M."/>
            <person name="Nakano M."/>
            <person name="Yamashita A."/>
            <person name="Kubota Y."/>
            <person name="Kimura S."/>
            <person name="Yasunaga T."/>
            <person name="Honda T."/>
            <person name="Shinagawa H."/>
            <person name="Hattori M."/>
            <person name="Iida T."/>
        </authorList>
    </citation>
    <scope>NUCLEOTIDE SEQUENCE [LARGE SCALE GENOMIC DNA]</scope>
    <source>
        <strain>RIMD 2210633</strain>
    </source>
</reference>
<protein>
    <recommendedName>
        <fullName evidence="1">ATP-dependent RNA helicase RhlB</fullName>
        <ecNumber evidence="1">3.6.4.13</ecNumber>
    </recommendedName>
</protein>
<sequence length="437" mass="49074">MKKTHITEQKFADLGLQPQVTEGLEKKGFEYCTPIQALALPVLLTGQDIAGQAQTGTGKTLAFLTATFNHLLTTPEHEGRQPTQPRAIIMAPTRELAIQIFNDAEPLIASTGLKAALAYGGESYDKQLAKLQDGVDILIGTTGRIIDFYKQRVFNLNNIQAVVLDEADRMFDLGFIKDIRFLFRRMPEPKERLNMLFSATLSYRVQELAFEHMHNPEHVVVEPAQKTGHRIQEELFYPSNEDKMALLQTLIEEEWPDRAIVFANTKHKCESVWGHLAADGHRVGLLTGDVPQKKREKILEQFTKGDVDILVATDVAARGLHIPQVTHVFNYDLPDDCEDYVHRIGRTGRAGASGHSISFACEEYAINLPAIEEYIEHTIPVSEYDASALIQDLPAPIRMRAPRVQQRRTNTGGTRSGNRKPQGRRPRQPRQSAPKQS</sequence>
<keyword id="KW-0067">ATP-binding</keyword>
<keyword id="KW-0963">Cytoplasm</keyword>
<keyword id="KW-0347">Helicase</keyword>
<keyword id="KW-0378">Hydrolase</keyword>
<keyword id="KW-0547">Nucleotide-binding</keyword>
<keyword id="KW-0694">RNA-binding</keyword>